<feature type="chain" id="PRO_0000093352" description="Multidrug resistance-associated protein 1">
    <location>
        <begin position="1"/>
        <end position="1531"/>
    </location>
</feature>
<feature type="topological domain" description="Extracellular" evidence="1">
    <location>
        <begin position="1"/>
        <end position="33"/>
    </location>
</feature>
<feature type="transmembrane region" description="Helical; Name=1" evidence="6">
    <location>
        <begin position="34"/>
        <end position="54"/>
    </location>
</feature>
<feature type="topological domain" description="Cytoplasmic" evidence="1">
    <location>
        <begin position="55"/>
        <end position="74"/>
    </location>
</feature>
<feature type="transmembrane region" description="Helical; Name=2" evidence="6">
    <location>
        <begin position="75"/>
        <end position="95"/>
    </location>
</feature>
<feature type="topological domain" description="Extracellular" evidence="1">
    <location>
        <begin position="96"/>
        <end position="100"/>
    </location>
</feature>
<feature type="transmembrane region" description="Helical; Name=3" evidence="6">
    <location>
        <begin position="101"/>
        <end position="121"/>
    </location>
</feature>
<feature type="topological domain" description="Cytoplasmic" evidence="1">
    <location>
        <begin position="122"/>
        <end position="133"/>
    </location>
</feature>
<feature type="transmembrane region" description="Helical; Name=4" evidence="6">
    <location>
        <begin position="134"/>
        <end position="154"/>
    </location>
</feature>
<feature type="topological domain" description="Extracellular" evidence="1">
    <location>
        <begin position="155"/>
        <end position="172"/>
    </location>
</feature>
<feature type="transmembrane region" description="Helical; Name=5" evidence="6">
    <location>
        <begin position="173"/>
        <end position="193"/>
    </location>
</feature>
<feature type="topological domain" description="Cytoplasmic" evidence="1">
    <location>
        <begin position="194"/>
        <end position="316"/>
    </location>
</feature>
<feature type="transmembrane region" description="Helical; Name=6" evidence="6">
    <location>
        <begin position="317"/>
        <end position="337"/>
    </location>
</feature>
<feature type="topological domain" description="Extracellular" evidence="1">
    <location>
        <begin position="338"/>
        <end position="363"/>
    </location>
</feature>
<feature type="transmembrane region" description="Helical; Name=7" evidence="6">
    <location>
        <begin position="364"/>
        <end position="384"/>
    </location>
</feature>
<feature type="topological domain" description="Cytoplasmic" evidence="1">
    <location>
        <begin position="385"/>
        <end position="440"/>
    </location>
</feature>
<feature type="transmembrane region" description="Helical; Name=8" evidence="6">
    <location>
        <begin position="441"/>
        <end position="461"/>
    </location>
</feature>
<feature type="topological domain" description="Extracellular" evidence="1">
    <location>
        <begin position="462"/>
        <end position="464"/>
    </location>
</feature>
<feature type="transmembrane region" description="Helical; Name=9" evidence="6">
    <location>
        <begin position="465"/>
        <end position="485"/>
    </location>
</feature>
<feature type="topological domain" description="Cytoplasmic" evidence="1">
    <location>
        <begin position="486"/>
        <end position="547"/>
    </location>
</feature>
<feature type="transmembrane region" description="Helical; Name=10" evidence="6">
    <location>
        <begin position="548"/>
        <end position="568"/>
    </location>
</feature>
<feature type="topological domain" description="Extracellular" evidence="1">
    <location>
        <begin position="569"/>
        <end position="590"/>
    </location>
</feature>
<feature type="transmembrane region" description="Helical; Name=11" evidence="6">
    <location>
        <begin position="591"/>
        <end position="611"/>
    </location>
</feature>
<feature type="topological domain" description="Cytoplasmic" evidence="1">
    <location>
        <begin position="612"/>
        <end position="967"/>
    </location>
</feature>
<feature type="transmembrane region" description="Helical; Name=12" evidence="6">
    <location>
        <begin position="968"/>
        <end position="988"/>
    </location>
</feature>
<feature type="topological domain" description="Extracellular" evidence="1">
    <location>
        <begin position="989"/>
        <end position="1025"/>
    </location>
</feature>
<feature type="transmembrane region" description="Helical; Name=13" evidence="6">
    <location>
        <begin position="1026"/>
        <end position="1046"/>
    </location>
</feature>
<feature type="topological domain" description="Cytoplasmic" evidence="1">
    <location>
        <begin position="1047"/>
        <end position="1089"/>
    </location>
</feature>
<feature type="transmembrane region" description="Helical; Name=14" evidence="6">
    <location>
        <begin position="1090"/>
        <end position="1110"/>
    </location>
</feature>
<feature type="topological domain" description="Extracellular" evidence="1">
    <location>
        <position position="1111"/>
    </location>
</feature>
<feature type="transmembrane region" description="Helical; Name=15" evidence="6">
    <location>
        <begin position="1112"/>
        <end position="1132"/>
    </location>
</feature>
<feature type="topological domain" description="Cytoplasmic" evidence="1">
    <location>
        <begin position="1133"/>
        <end position="1203"/>
    </location>
</feature>
<feature type="transmembrane region" description="Helical; Name=16" evidence="6">
    <location>
        <begin position="1204"/>
        <end position="1224"/>
    </location>
</feature>
<feature type="topological domain" description="Extracellular" evidence="1">
    <location>
        <begin position="1225"/>
        <end position="1226"/>
    </location>
</feature>
<feature type="transmembrane region" description="Helical; Name=17" evidence="6">
    <location>
        <begin position="1227"/>
        <end position="1247"/>
    </location>
</feature>
<feature type="topological domain" description="Cytoplasmic" evidence="1">
    <location>
        <begin position="1248"/>
        <end position="1531"/>
    </location>
</feature>
<feature type="domain" description="ABC transmembrane type-1 1" evidence="6">
    <location>
        <begin position="325"/>
        <end position="608"/>
    </location>
</feature>
<feature type="domain" description="ABC transporter 1" evidence="5">
    <location>
        <begin position="644"/>
        <end position="868"/>
    </location>
</feature>
<feature type="domain" description="ABC transmembrane type-1 2" evidence="6">
    <location>
        <begin position="975"/>
        <end position="1256"/>
    </location>
</feature>
<feature type="domain" description="ABC transporter 2" evidence="5">
    <location>
        <begin position="1293"/>
        <end position="1527"/>
    </location>
</feature>
<feature type="region of interest" description="Disordered" evidence="7">
    <location>
        <begin position="871"/>
        <end position="893"/>
    </location>
</feature>
<feature type="region of interest" description="Disordered" evidence="7">
    <location>
        <begin position="917"/>
        <end position="938"/>
    </location>
</feature>
<feature type="compositionally biased region" description="Polar residues" evidence="7">
    <location>
        <begin position="922"/>
        <end position="933"/>
    </location>
</feature>
<feature type="binding site" evidence="5">
    <location>
        <begin position="678"/>
        <end position="685"/>
    </location>
    <ligand>
        <name>ATP</name>
        <dbReference type="ChEBI" id="CHEBI:30616"/>
        <label>1</label>
    </ligand>
</feature>
<feature type="binding site" evidence="5">
    <location>
        <begin position="1327"/>
        <end position="1334"/>
    </location>
    <ligand>
        <name>ATP</name>
        <dbReference type="ChEBI" id="CHEBI:30616"/>
        <label>2</label>
    </ligand>
</feature>
<feature type="modified residue" description="Phosphotyrosine" evidence="2">
    <location>
        <position position="277"/>
    </location>
</feature>
<feature type="modified residue" description="Phosphoserine" evidence="2">
    <location>
        <position position="289"/>
    </location>
</feature>
<feature type="modified residue" description="N6-succinyllysine" evidence="2">
    <location>
        <position position="503"/>
    </location>
</feature>
<feature type="modified residue" description="Phosphoserine" evidence="3">
    <location>
        <position position="905"/>
    </location>
</feature>
<feature type="modified residue" description="Phosphoserine" evidence="3">
    <location>
        <position position="915"/>
    </location>
</feature>
<feature type="modified residue" description="Phosphoserine" evidence="3">
    <location>
        <position position="930"/>
    </location>
</feature>
<feature type="glycosylation site" description="N-linked (GlcNAc...) asparagine" evidence="4">
    <location>
        <position position="19"/>
    </location>
</feature>
<feature type="glycosylation site" description="N-linked (GlcNAc...) asparagine" evidence="4">
    <location>
        <position position="1006"/>
    </location>
</feature>
<feature type="sequence variant" evidence="8">
    <original>M</original>
    <variation>I</variation>
    <location>
        <position position="173"/>
    </location>
</feature>
<feature type="sequence variant" evidence="8">
    <original>L</original>
    <variation>I</variation>
    <location>
        <position position="704"/>
    </location>
</feature>
<feature type="sequence variant" evidence="8">
    <original>C</original>
    <variation>Y</variation>
    <location>
        <position position="1047"/>
    </location>
</feature>
<keyword id="KW-0067">ATP-binding</keyword>
<keyword id="KW-1003">Cell membrane</keyword>
<keyword id="KW-0325">Glycoprotein</keyword>
<keyword id="KW-0378">Hydrolase</keyword>
<keyword id="KW-0445">Lipid transport</keyword>
<keyword id="KW-0472">Membrane</keyword>
<keyword id="KW-0547">Nucleotide-binding</keyword>
<keyword id="KW-0597">Phosphoprotein</keyword>
<keyword id="KW-1185">Reference proteome</keyword>
<keyword id="KW-0677">Repeat</keyword>
<keyword id="KW-1278">Translocase</keyword>
<keyword id="KW-0812">Transmembrane</keyword>
<keyword id="KW-1133">Transmembrane helix</keyword>
<keyword id="KW-0813">Transport</keyword>
<accession>Q864R9</accession>
<accession>Q864S0</accession>
<proteinExistence type="evidence at protein level"/>
<sequence length="1531" mass="171659">MALRGFCSADGSDPLWDWNVTWYTSNPDFTKCFQNTVLVWVPCFYLWACFPFYFLYLSRHDRGYIQMTLLNKTKTALGFLLWIVCWADLFYSFWERSRGIFLAPVFLVSPTLLGITMLLATFLIQLERRKGVQSSGIMLTFWLVALLCALAILRSKIMTALKEDVQVDLFRDMTFYVYFSLVLIQLVLSCFSDRSPLFSETIHDPNPCPESSASFLSRITFWWITGLIVRGYRQPLEGSDLWSLNKEDTSEQVVPVLVKNWKKECAKTRKQPVKVVYSSKDPAQPKDSSKVDANEEVEALIVKSPQKEWNPSLFKVLYKTFGPYFLMSFFFKAIHDLMMFSGPEILKLLINFVNDTKAPDWQGYFYTALLFVAACLQTLVLHQYFHICFVSGMRIKTAVIGAVYRKALVITNAARKSSTVGEIVNLMSVDAQRFMDLATYINMIWSAPLQVILALYLLWRNLGPPILAGVAVMVLMVPVNAVMAMKTKTYQVAHMKSKDNRIKLMNEILNGIKVLKLYAWELAFKDKVLAIRQEELKVLKKSAYLAAVGTFTWVCTPFLVALCTFAVYVTIDKNNVLDAQKAFVSLALFNILRFPLNILPMVISSIVQASVSLKRLRIFLSHEELEPDSIERRPVKDGGDTNSITVRNATFTWARSDPPTLNGITFSIPEGALVAVVGQVGCGKSSLLSALLAEMDKVEGHVALKGSVAYVPQQAWIQNDSLQENILFGCQLEEPYYRSVIQACALLPDLEILPSGDRTEIGEKGVNLSGGQKQRVSLARAVYCNADIYLFDDPLSAVDAHVGKHIFENVIGPKGMLKNKTRILVTHSMSYLPQVDVIIVMSGGKISEMGSYQELLARDGAFAEFLRTYASAEQEQDPEDNGVTGVSGPGKEAKQMENGMLVTDSAGKQLQRQLSSSSSYSGDVSRQHNSTAELQKDGAKKEETWKLMEADKAQTGQVKLSVYWDYMKAIGLFISFLSIFLFICNHVAALASNYWLSLWTDDPIVNGTQEHTKVRLSVYGALGISQGIAVFGYSMAVSIGGILASRCLHVDLLHSILRSPMSFFERTPSGNLVNRFSKELDTVDSMIPEVIKMFMGSLFNVIGACIVILLATPIAAIIIPPLGLIYFFVQRFYVASSRQLKRLESVSRSPVYSHFNETLLGVSVIRAFEEQERFIHQSDLKVDENQKAYYPSIVANRWLAVRLECVGNCIVLFAALFAVISRHSLSAGLVGLSVSYSLQVTTYLNWLVRMSSEMETNIVAVERLKEYSETEKEAPWQIQETAPPSNWPQVGRVEFRNYCLRYREDLDFVLRHINVTINGGEKVGIVGRTGAGKSSLTLGLFRINESAEGEIIIDGINIARIGLHDLRFKITIIPQDPVLFSGSLRMNLDPFSQYSDEEVWTSLELAHLKGFVSALPDKLDHECAEGGENLSVGQRQLVCLARALLRKTKILVLDEATAAVDLETDDLIQSTIRTQFEDCTVLTIAHRLNTIMDYTRVIVLDKGEIQEYGAPSDLLQQRGLFYNMARDAGLV</sequence>
<dbReference type="EC" id="7.6.2.2" evidence="8"/>
<dbReference type="EC" id="7.6.2.3" evidence="2"/>
<dbReference type="EMBL" id="AY146672">
    <property type="protein sequence ID" value="AAN65348.1"/>
    <property type="molecule type" value="mRNA"/>
</dbReference>
<dbReference type="EMBL" id="AY146673">
    <property type="protein sequence ID" value="AAN65349.1"/>
    <property type="molecule type" value="mRNA"/>
</dbReference>
<dbReference type="RefSeq" id="NP_001271100.1">
    <property type="nucleotide sequence ID" value="NM_001284171.1"/>
</dbReference>
<dbReference type="SMR" id="Q864R9"/>
<dbReference type="STRING" id="9541.ENSMFAP00000044360"/>
<dbReference type="GlyCosmos" id="Q864R9">
    <property type="glycosylation" value="2 sites, No reported glycans"/>
</dbReference>
<dbReference type="eggNOG" id="KOG0054">
    <property type="taxonomic scope" value="Eukaryota"/>
</dbReference>
<dbReference type="Proteomes" id="UP000233100">
    <property type="component" value="Unplaced"/>
</dbReference>
<dbReference type="GO" id="GO:0016323">
    <property type="term" value="C:basolateral plasma membrane"/>
    <property type="evidence" value="ECO:0007669"/>
    <property type="project" value="UniProtKB-SubCell"/>
</dbReference>
<dbReference type="GO" id="GO:0015431">
    <property type="term" value="F:ABC-type glutathione S-conjugate transporter activity"/>
    <property type="evidence" value="ECO:0000250"/>
    <property type="project" value="UniProtKB"/>
</dbReference>
<dbReference type="GO" id="GO:0140359">
    <property type="term" value="F:ABC-type transporter activity"/>
    <property type="evidence" value="ECO:0000250"/>
    <property type="project" value="UniProtKB"/>
</dbReference>
<dbReference type="GO" id="GO:0008559">
    <property type="term" value="F:ABC-type xenobiotic transporter activity"/>
    <property type="evidence" value="ECO:0007669"/>
    <property type="project" value="UniProtKB-EC"/>
</dbReference>
<dbReference type="GO" id="GO:0005524">
    <property type="term" value="F:ATP binding"/>
    <property type="evidence" value="ECO:0007669"/>
    <property type="project" value="UniProtKB-KW"/>
</dbReference>
<dbReference type="GO" id="GO:0016887">
    <property type="term" value="F:ATP hydrolysis activity"/>
    <property type="evidence" value="ECO:0007669"/>
    <property type="project" value="InterPro"/>
</dbReference>
<dbReference type="GO" id="GO:0034634">
    <property type="term" value="F:glutathione transmembrane transporter activity"/>
    <property type="evidence" value="ECO:0007669"/>
    <property type="project" value="TreeGrafter"/>
</dbReference>
<dbReference type="GO" id="GO:0042910">
    <property type="term" value="F:xenobiotic transmembrane transporter activity"/>
    <property type="evidence" value="ECO:0000250"/>
    <property type="project" value="UniProtKB"/>
</dbReference>
<dbReference type="GO" id="GO:0070729">
    <property type="term" value="P:cyclic nucleotide transport"/>
    <property type="evidence" value="ECO:0000250"/>
    <property type="project" value="UniProtKB"/>
</dbReference>
<dbReference type="GO" id="GO:0071716">
    <property type="term" value="P:leukotriene transport"/>
    <property type="evidence" value="ECO:0000250"/>
    <property type="project" value="UniProtKB"/>
</dbReference>
<dbReference type="GO" id="GO:0006869">
    <property type="term" value="P:lipid transport"/>
    <property type="evidence" value="ECO:0007669"/>
    <property type="project" value="UniProtKB-KW"/>
</dbReference>
<dbReference type="GO" id="GO:0050729">
    <property type="term" value="P:positive regulation of inflammatory response"/>
    <property type="evidence" value="ECO:0000250"/>
    <property type="project" value="UniProtKB"/>
</dbReference>
<dbReference type="GO" id="GO:0009410">
    <property type="term" value="P:response to xenobiotic stimulus"/>
    <property type="evidence" value="ECO:0000250"/>
    <property type="project" value="UniProtKB"/>
</dbReference>
<dbReference type="CDD" id="cd18595">
    <property type="entry name" value="ABC_6TM_MRP1_2_3_6_D1_like"/>
    <property type="match status" value="1"/>
</dbReference>
<dbReference type="CDD" id="cd18603">
    <property type="entry name" value="ABC_6TM_MRP1_2_3_6_D2_like"/>
    <property type="match status" value="1"/>
</dbReference>
<dbReference type="CDD" id="cd03250">
    <property type="entry name" value="ABCC_MRP_domain1"/>
    <property type="match status" value="1"/>
</dbReference>
<dbReference type="CDD" id="cd03244">
    <property type="entry name" value="ABCC_MRP_domain2"/>
    <property type="match status" value="1"/>
</dbReference>
<dbReference type="FunFam" id="3.40.50.300:FF:000293">
    <property type="entry name" value="ATP binding cassette subfamily C member 1"/>
    <property type="match status" value="1"/>
</dbReference>
<dbReference type="FunFam" id="1.20.1560.10:FF:000001">
    <property type="entry name" value="ATP-binding cassette subfamily C member 1"/>
    <property type="match status" value="1"/>
</dbReference>
<dbReference type="FunFam" id="1.20.1560.10:FF:000007">
    <property type="entry name" value="ATP-binding cassette subfamily C member 1"/>
    <property type="match status" value="1"/>
</dbReference>
<dbReference type="FunFam" id="3.40.50.300:FF:000074">
    <property type="entry name" value="Multidrug resistance-associated protein 5 isoform 1"/>
    <property type="match status" value="1"/>
</dbReference>
<dbReference type="Gene3D" id="1.20.1560.10">
    <property type="entry name" value="ABC transporter type 1, transmembrane domain"/>
    <property type="match status" value="2"/>
</dbReference>
<dbReference type="Gene3D" id="3.40.50.300">
    <property type="entry name" value="P-loop containing nucleotide triphosphate hydrolases"/>
    <property type="match status" value="2"/>
</dbReference>
<dbReference type="InterPro" id="IPR003593">
    <property type="entry name" value="AAA+_ATPase"/>
</dbReference>
<dbReference type="InterPro" id="IPR011527">
    <property type="entry name" value="ABC1_TM_dom"/>
</dbReference>
<dbReference type="InterPro" id="IPR036640">
    <property type="entry name" value="ABC1_TM_sf"/>
</dbReference>
<dbReference type="InterPro" id="IPR003439">
    <property type="entry name" value="ABC_transporter-like_ATP-bd"/>
</dbReference>
<dbReference type="InterPro" id="IPR017871">
    <property type="entry name" value="ABC_transporter-like_CS"/>
</dbReference>
<dbReference type="InterPro" id="IPR050173">
    <property type="entry name" value="ABC_transporter_C-like"/>
</dbReference>
<dbReference type="InterPro" id="IPR005292">
    <property type="entry name" value="MRP"/>
</dbReference>
<dbReference type="InterPro" id="IPR027417">
    <property type="entry name" value="P-loop_NTPase"/>
</dbReference>
<dbReference type="InterPro" id="IPR056227">
    <property type="entry name" value="TMD0_ABC"/>
</dbReference>
<dbReference type="NCBIfam" id="TIGR00957">
    <property type="entry name" value="MRP_assoc_pro"/>
    <property type="match status" value="1"/>
</dbReference>
<dbReference type="PANTHER" id="PTHR24223">
    <property type="entry name" value="ATP-BINDING CASSETTE SUB-FAMILY C"/>
    <property type="match status" value="1"/>
</dbReference>
<dbReference type="PANTHER" id="PTHR24223:SF241">
    <property type="entry name" value="MULTIDRUG RESISTANCE-ASSOCIATED PROTEIN 1"/>
    <property type="match status" value="1"/>
</dbReference>
<dbReference type="Pfam" id="PF00664">
    <property type="entry name" value="ABC_membrane"/>
    <property type="match status" value="2"/>
</dbReference>
<dbReference type="Pfam" id="PF00005">
    <property type="entry name" value="ABC_tran"/>
    <property type="match status" value="2"/>
</dbReference>
<dbReference type="Pfam" id="PF24357">
    <property type="entry name" value="TMD0_ABC"/>
    <property type="match status" value="1"/>
</dbReference>
<dbReference type="SMART" id="SM00382">
    <property type="entry name" value="AAA"/>
    <property type="match status" value="2"/>
</dbReference>
<dbReference type="SUPFAM" id="SSF90123">
    <property type="entry name" value="ABC transporter transmembrane region"/>
    <property type="match status" value="2"/>
</dbReference>
<dbReference type="SUPFAM" id="SSF52540">
    <property type="entry name" value="P-loop containing nucleoside triphosphate hydrolases"/>
    <property type="match status" value="2"/>
</dbReference>
<dbReference type="PROSITE" id="PS50929">
    <property type="entry name" value="ABC_TM1F"/>
    <property type="match status" value="2"/>
</dbReference>
<dbReference type="PROSITE" id="PS00211">
    <property type="entry name" value="ABC_TRANSPORTER_1"/>
    <property type="match status" value="2"/>
</dbReference>
<dbReference type="PROSITE" id="PS50893">
    <property type="entry name" value="ABC_TRANSPORTER_2"/>
    <property type="match status" value="2"/>
</dbReference>
<gene>
    <name evidence="3" type="primary">ABCC1</name>
    <name type="synonym">MRP1</name>
</gene>
<name>MRP1_MACFA</name>
<comment type="function">
    <text evidence="2 3 8">Mediates export of organic anions and drugs from the cytoplasm. Mediates ATP-dependent transport of glutathione and glutathione conjugates, leukotriene C4, estradiol-17-beta-o-glucuronide, methotrexate, antiviral drugs and other xenobiotics. Confers resistance to anticancer drugs by decreasing accumulation of drug in cells, and by mediating ATP- and GSH-dependent drug export (PubMed:12657726). Hydrolyzes ATP with low efficiency. Catalyzes the export of sphingosine 1-phosphate from mast cells independently of their degranulation (By similarity). Participates in inflammatory response by allowing export of leukotriene C4 from leukotriene C4-synthesizing cells (By similarity). Mediates ATP-dependent, GSH-independent cyclic GMP-AMP (cGAMP) export (By similarity). Thus, by limiting intracellular cGAMP concentrations negatively regulates the cGAS-STING pathway (By similarity). Exports S-geranylgeranyl-glutathione (GGG) in lymphoid cells and stromal compartments of lymphoid organs. ABCC1 (via extracellular transport) with GGT5 (via GGG catabolism) establish GGG gradients within lymphoid tissues to position P2RY8-positive lymphocytes at germinal centers in lymphoid follicles and restrict their chemotactic transmigration from blood vessels to the bone marrow parenchyma (By similarity). Mediates basolateral export of GSH-conjugated R- and S-prostaglandin A2 diastereomers in polarized epithelial cells (By similarity).</text>
</comment>
<comment type="catalytic activity">
    <reaction evidence="8">
        <text>ATP + H2O + xenobioticSide 1 = ADP + phosphate + xenobioticSide 2.</text>
        <dbReference type="EC" id="7.6.2.2"/>
    </reaction>
</comment>
<comment type="catalytic activity">
    <reaction evidence="2">
        <text>an S-substituted glutathione(in) + ATP + H2O = an S-substituted glutathione(out) + ADP + phosphate + H(+)</text>
        <dbReference type="Rhea" id="RHEA:19121"/>
        <dbReference type="ChEBI" id="CHEBI:15377"/>
        <dbReference type="ChEBI" id="CHEBI:15378"/>
        <dbReference type="ChEBI" id="CHEBI:30616"/>
        <dbReference type="ChEBI" id="CHEBI:43474"/>
        <dbReference type="ChEBI" id="CHEBI:90779"/>
        <dbReference type="ChEBI" id="CHEBI:456216"/>
        <dbReference type="EC" id="7.6.2.3"/>
    </reaction>
    <physiologicalReaction direction="left-to-right" evidence="2">
        <dbReference type="Rhea" id="RHEA:19122"/>
    </physiologicalReaction>
</comment>
<comment type="catalytic activity">
    <reaction evidence="3">
        <text>sphing-4-enine 1-phosphate(in) + ATP + H2O = sphing-4-enine 1-phosphate(out) + ADP + phosphate + H(+)</text>
        <dbReference type="Rhea" id="RHEA:38951"/>
        <dbReference type="ChEBI" id="CHEBI:15377"/>
        <dbReference type="ChEBI" id="CHEBI:15378"/>
        <dbReference type="ChEBI" id="CHEBI:30616"/>
        <dbReference type="ChEBI" id="CHEBI:43474"/>
        <dbReference type="ChEBI" id="CHEBI:60119"/>
        <dbReference type="ChEBI" id="CHEBI:456216"/>
    </reaction>
    <physiologicalReaction direction="left-to-right" evidence="3">
        <dbReference type="Rhea" id="RHEA:38952"/>
    </physiologicalReaction>
</comment>
<comment type="catalytic activity">
    <reaction evidence="8">
        <text>leukotriene C4(in) + ATP + H2O = leukotriene C4(out) + ADP + phosphate + H(+)</text>
        <dbReference type="Rhea" id="RHEA:38963"/>
        <dbReference type="ChEBI" id="CHEBI:15377"/>
        <dbReference type="ChEBI" id="CHEBI:15378"/>
        <dbReference type="ChEBI" id="CHEBI:30616"/>
        <dbReference type="ChEBI" id="CHEBI:43474"/>
        <dbReference type="ChEBI" id="CHEBI:57973"/>
        <dbReference type="ChEBI" id="CHEBI:456216"/>
    </reaction>
    <physiologicalReaction direction="left-to-right" evidence="8">
        <dbReference type="Rhea" id="RHEA:38964"/>
    </physiologicalReaction>
</comment>
<comment type="catalytic activity">
    <reaction evidence="3">
        <text>17beta-estradiol 17-O-(beta-D-glucuronate)(in) + ATP + H2O = 17beta-estradiol 17-O-(beta-D-glucuronate)(out) + ADP + phosphate + H(+)</text>
        <dbReference type="Rhea" id="RHEA:60128"/>
        <dbReference type="ChEBI" id="CHEBI:15377"/>
        <dbReference type="ChEBI" id="CHEBI:15378"/>
        <dbReference type="ChEBI" id="CHEBI:30616"/>
        <dbReference type="ChEBI" id="CHEBI:43474"/>
        <dbReference type="ChEBI" id="CHEBI:82961"/>
        <dbReference type="ChEBI" id="CHEBI:456216"/>
    </reaction>
    <physiologicalReaction direction="left-to-right" evidence="3">
        <dbReference type="Rhea" id="RHEA:60129"/>
    </physiologicalReaction>
</comment>
<comment type="catalytic activity">
    <reaction evidence="3">
        <text>daunorubicin(in) + ATP + H2O = daunorubicin(out) + ADP + phosphate + H(+)</text>
        <dbReference type="Rhea" id="RHEA:33147"/>
        <dbReference type="ChEBI" id="CHEBI:15377"/>
        <dbReference type="ChEBI" id="CHEBI:15378"/>
        <dbReference type="ChEBI" id="CHEBI:30616"/>
        <dbReference type="ChEBI" id="CHEBI:43474"/>
        <dbReference type="ChEBI" id="CHEBI:64677"/>
        <dbReference type="ChEBI" id="CHEBI:456216"/>
    </reaction>
    <physiologicalReaction direction="left-to-right" evidence="3">
        <dbReference type="Rhea" id="RHEA:33148"/>
    </physiologicalReaction>
</comment>
<comment type="catalytic activity">
    <reaction evidence="3">
        <text>vincristine(in) + ATP + H2O = vincristine(out) + ADP + phosphate + H(+)</text>
        <dbReference type="Rhea" id="RHEA:60160"/>
        <dbReference type="ChEBI" id="CHEBI:15377"/>
        <dbReference type="ChEBI" id="CHEBI:15378"/>
        <dbReference type="ChEBI" id="CHEBI:30616"/>
        <dbReference type="ChEBI" id="CHEBI:43474"/>
        <dbReference type="ChEBI" id="CHEBI:143658"/>
        <dbReference type="ChEBI" id="CHEBI:456216"/>
    </reaction>
    <physiologicalReaction direction="left-to-right" evidence="3">
        <dbReference type="Rhea" id="RHEA:60161"/>
    </physiologicalReaction>
</comment>
<comment type="catalytic activity">
    <reaction evidence="3">
        <text>2',3'-cGAMP(in) + ATP + H2O = 2',3'-cGAMP(out) + ADP + phosphate + H(+)</text>
        <dbReference type="Rhea" id="RHEA:74887"/>
        <dbReference type="ChEBI" id="CHEBI:15377"/>
        <dbReference type="ChEBI" id="CHEBI:15378"/>
        <dbReference type="ChEBI" id="CHEBI:30616"/>
        <dbReference type="ChEBI" id="CHEBI:43474"/>
        <dbReference type="ChEBI" id="CHEBI:143093"/>
        <dbReference type="ChEBI" id="CHEBI:456216"/>
    </reaction>
</comment>
<comment type="catalytic activity">
    <reaction evidence="2">
        <text>S-[(2E,6E,10E)-geranylgeranyl]-L-glutathione(in) + ATP + H2O = S-[(2E,6E,10E)-geranylgeranyl]-L-glutathione(out) + ADP + phosphate + H(+)</text>
        <dbReference type="Rhea" id="RHEA:81611"/>
        <dbReference type="ChEBI" id="CHEBI:15377"/>
        <dbReference type="ChEBI" id="CHEBI:15378"/>
        <dbReference type="ChEBI" id="CHEBI:30616"/>
        <dbReference type="ChEBI" id="CHEBI:43474"/>
        <dbReference type="ChEBI" id="CHEBI:156326"/>
        <dbReference type="ChEBI" id="CHEBI:456216"/>
    </reaction>
    <physiologicalReaction direction="left-to-right" evidence="2">
        <dbReference type="Rhea" id="RHEA:81612"/>
    </physiologicalReaction>
</comment>
<comment type="catalytic activity">
    <reaction evidence="3">
        <text>prostaglandin A2-S-(R)-glutathione(in) + ATP + H2O = prostaglandin A2-S-(R)-glutathione(out) + ADP + phosphate + H(+)</text>
        <dbReference type="Rhea" id="RHEA:81695"/>
        <dbReference type="ChEBI" id="CHEBI:15377"/>
        <dbReference type="ChEBI" id="CHEBI:15378"/>
        <dbReference type="ChEBI" id="CHEBI:30616"/>
        <dbReference type="ChEBI" id="CHEBI:43474"/>
        <dbReference type="ChEBI" id="CHEBI:133768"/>
        <dbReference type="ChEBI" id="CHEBI:456216"/>
    </reaction>
    <physiologicalReaction direction="left-to-right" evidence="3">
        <dbReference type="Rhea" id="RHEA:81696"/>
    </physiologicalReaction>
</comment>
<comment type="catalytic activity">
    <reaction evidence="3">
        <text>prostaglandin A2-S-(S)-glutathione(in) + ATP + H2O = prostaglandin A2-S-(S)-glutathione(out) + ADP + phosphate + H(+)</text>
        <dbReference type="Rhea" id="RHEA:81699"/>
        <dbReference type="ChEBI" id="CHEBI:15377"/>
        <dbReference type="ChEBI" id="CHEBI:15378"/>
        <dbReference type="ChEBI" id="CHEBI:30616"/>
        <dbReference type="ChEBI" id="CHEBI:43474"/>
        <dbReference type="ChEBI" id="CHEBI:133769"/>
        <dbReference type="ChEBI" id="CHEBI:456216"/>
    </reaction>
    <physiologicalReaction direction="left-to-right" evidence="3">
        <dbReference type="Rhea" id="RHEA:81700"/>
    </physiologicalReaction>
</comment>
<comment type="activity regulation">
    <text evidence="3">MK 571 inhibits sphingosine 1-phosphate and leukotriene C4 export.</text>
</comment>
<comment type="subcellular location">
    <subcellularLocation>
        <location evidence="3">Cell membrane</location>
        <topology evidence="4">Multi-pass membrane protein</topology>
    </subcellularLocation>
    <subcellularLocation>
        <location evidence="3">Basolateral cell membrane</location>
        <topology evidence="4">Multi-pass membrane protein</topology>
    </subcellularLocation>
</comment>
<comment type="similarity">
    <text evidence="9">Belongs to the ABC transporter superfamily. ABCC family. Conjugate transporter (TC 3.A.1.208) subfamily.</text>
</comment>
<protein>
    <recommendedName>
        <fullName evidence="3">Multidrug resistance-associated protein 1</fullName>
        <ecNumber evidence="8">7.6.2.2</ecNumber>
    </recommendedName>
    <alternativeName>
        <fullName>ATP-binding cassette sub-family C member 1</fullName>
    </alternativeName>
    <alternativeName>
        <fullName evidence="2">Glutathione-S-conjugate-translocating ATPase ABCC1</fullName>
        <ecNumber evidence="2">7.6.2.3</ecNumber>
    </alternativeName>
    <alternativeName>
        <fullName>Leukotriene C(4) transporter</fullName>
        <shortName>LTC4 transporter</shortName>
    </alternativeName>
</protein>
<organism>
    <name type="scientific">Macaca fascicularis</name>
    <name type="common">Crab-eating macaque</name>
    <name type="synonym">Cynomolgus monkey</name>
    <dbReference type="NCBI Taxonomy" id="9541"/>
    <lineage>
        <taxon>Eukaryota</taxon>
        <taxon>Metazoa</taxon>
        <taxon>Chordata</taxon>
        <taxon>Craniata</taxon>
        <taxon>Vertebrata</taxon>
        <taxon>Euteleostomi</taxon>
        <taxon>Mammalia</taxon>
        <taxon>Eutheria</taxon>
        <taxon>Euarchontoglires</taxon>
        <taxon>Primates</taxon>
        <taxon>Haplorrhini</taxon>
        <taxon>Catarrhini</taxon>
        <taxon>Cercopithecidae</taxon>
        <taxon>Cercopithecinae</taxon>
        <taxon>Macaca</taxon>
    </lineage>
</organism>
<reference key="1">
    <citation type="journal article" date="2003" name="Mol. Cancer Ther.">
        <title>Cloning and functional characterization of the multidrug resistance-associated protein (MRP1/ABCC1) from the cynomolgus monkey.</title>
        <authorList>
            <person name="Godinot N."/>
            <person name="Iversen P.W."/>
            <person name="Tabas L."/>
            <person name="Xia X."/>
            <person name="Williams D.C."/>
            <person name="Dantzig A.H."/>
            <person name="Perry W.L. III"/>
        </authorList>
    </citation>
    <scope>NUCLEOTIDE SEQUENCE [MRNA]</scope>
    <scope>FUNCTION</scope>
    <scope>SUBCELLULAR LOCATION</scope>
    <scope>VARIANTS ILE-173; ILE-704 AND TYR-1047</scope>
    <scope>CATALYTIC ACTIVITY</scope>
</reference>
<evidence type="ECO:0000250" key="1"/>
<evidence type="ECO:0000250" key="2">
    <source>
        <dbReference type="UniProtKB" id="O35379"/>
    </source>
</evidence>
<evidence type="ECO:0000250" key="3">
    <source>
        <dbReference type="UniProtKB" id="P33527"/>
    </source>
</evidence>
<evidence type="ECO:0000255" key="4"/>
<evidence type="ECO:0000255" key="5">
    <source>
        <dbReference type="PROSITE-ProRule" id="PRU00434"/>
    </source>
</evidence>
<evidence type="ECO:0000255" key="6">
    <source>
        <dbReference type="PROSITE-ProRule" id="PRU00441"/>
    </source>
</evidence>
<evidence type="ECO:0000256" key="7">
    <source>
        <dbReference type="SAM" id="MobiDB-lite"/>
    </source>
</evidence>
<evidence type="ECO:0000269" key="8">
    <source>
    </source>
</evidence>
<evidence type="ECO:0000305" key="9"/>